<reference key="1">
    <citation type="submission" date="2007-11" db="EMBL/GenBank/DDBJ databases">
        <title>Complete sequence of chromosome of Shewanella baltica OS195.</title>
        <authorList>
            <consortium name="US DOE Joint Genome Institute"/>
            <person name="Copeland A."/>
            <person name="Lucas S."/>
            <person name="Lapidus A."/>
            <person name="Barry K."/>
            <person name="Glavina del Rio T."/>
            <person name="Dalin E."/>
            <person name="Tice H."/>
            <person name="Pitluck S."/>
            <person name="Chain P."/>
            <person name="Malfatti S."/>
            <person name="Shin M."/>
            <person name="Vergez L."/>
            <person name="Schmutz J."/>
            <person name="Larimer F."/>
            <person name="Land M."/>
            <person name="Hauser L."/>
            <person name="Kyrpides N."/>
            <person name="Kim E."/>
            <person name="Brettar I."/>
            <person name="Rodrigues J."/>
            <person name="Konstantinidis K."/>
            <person name="Klappenbach J."/>
            <person name="Hofle M."/>
            <person name="Tiedje J."/>
            <person name="Richardson P."/>
        </authorList>
    </citation>
    <scope>NUCLEOTIDE SEQUENCE [LARGE SCALE GENOMIC DNA]</scope>
    <source>
        <strain>OS195</strain>
    </source>
</reference>
<comment type="function">
    <text evidence="1">Reversibly transfers an adenylyl group from ATP to 4'-phosphopantetheine, yielding dephospho-CoA (dPCoA) and pyrophosphate.</text>
</comment>
<comment type="catalytic activity">
    <reaction evidence="1">
        <text>(R)-4'-phosphopantetheine + ATP + H(+) = 3'-dephospho-CoA + diphosphate</text>
        <dbReference type="Rhea" id="RHEA:19801"/>
        <dbReference type="ChEBI" id="CHEBI:15378"/>
        <dbReference type="ChEBI" id="CHEBI:30616"/>
        <dbReference type="ChEBI" id="CHEBI:33019"/>
        <dbReference type="ChEBI" id="CHEBI:57328"/>
        <dbReference type="ChEBI" id="CHEBI:61723"/>
        <dbReference type="EC" id="2.7.7.3"/>
    </reaction>
</comment>
<comment type="cofactor">
    <cofactor evidence="1">
        <name>Mg(2+)</name>
        <dbReference type="ChEBI" id="CHEBI:18420"/>
    </cofactor>
</comment>
<comment type="pathway">
    <text evidence="1">Cofactor biosynthesis; coenzyme A biosynthesis; CoA from (R)-pantothenate: step 4/5.</text>
</comment>
<comment type="subunit">
    <text evidence="1">Homohexamer.</text>
</comment>
<comment type="subcellular location">
    <subcellularLocation>
        <location evidence="1">Cytoplasm</location>
    </subcellularLocation>
</comment>
<comment type="similarity">
    <text evidence="1">Belongs to the bacterial CoaD family.</text>
</comment>
<evidence type="ECO:0000255" key="1">
    <source>
        <dbReference type="HAMAP-Rule" id="MF_00151"/>
    </source>
</evidence>
<accession>A9KWX0</accession>
<name>COAD_SHEB9</name>
<organism>
    <name type="scientific">Shewanella baltica (strain OS195)</name>
    <dbReference type="NCBI Taxonomy" id="399599"/>
    <lineage>
        <taxon>Bacteria</taxon>
        <taxon>Pseudomonadati</taxon>
        <taxon>Pseudomonadota</taxon>
        <taxon>Gammaproteobacteria</taxon>
        <taxon>Alteromonadales</taxon>
        <taxon>Shewanellaceae</taxon>
        <taxon>Shewanella</taxon>
    </lineage>
</organism>
<dbReference type="EC" id="2.7.7.3" evidence="1"/>
<dbReference type="EMBL" id="CP000891">
    <property type="protein sequence ID" value="ABX51628.1"/>
    <property type="molecule type" value="Genomic_DNA"/>
</dbReference>
<dbReference type="RefSeq" id="WP_006084735.1">
    <property type="nucleotide sequence ID" value="NC_009997.1"/>
</dbReference>
<dbReference type="SMR" id="A9KWX0"/>
<dbReference type="GeneID" id="11774424"/>
<dbReference type="KEGG" id="sbn:Sbal195_4471"/>
<dbReference type="HOGENOM" id="CLU_100149_0_1_6"/>
<dbReference type="UniPathway" id="UPA00241">
    <property type="reaction ID" value="UER00355"/>
</dbReference>
<dbReference type="Proteomes" id="UP000000770">
    <property type="component" value="Chromosome"/>
</dbReference>
<dbReference type="GO" id="GO:0005737">
    <property type="term" value="C:cytoplasm"/>
    <property type="evidence" value="ECO:0007669"/>
    <property type="project" value="UniProtKB-SubCell"/>
</dbReference>
<dbReference type="GO" id="GO:0005524">
    <property type="term" value="F:ATP binding"/>
    <property type="evidence" value="ECO:0007669"/>
    <property type="project" value="UniProtKB-KW"/>
</dbReference>
<dbReference type="GO" id="GO:0004595">
    <property type="term" value="F:pantetheine-phosphate adenylyltransferase activity"/>
    <property type="evidence" value="ECO:0007669"/>
    <property type="project" value="UniProtKB-UniRule"/>
</dbReference>
<dbReference type="GO" id="GO:0015937">
    <property type="term" value="P:coenzyme A biosynthetic process"/>
    <property type="evidence" value="ECO:0007669"/>
    <property type="project" value="UniProtKB-UniRule"/>
</dbReference>
<dbReference type="CDD" id="cd02163">
    <property type="entry name" value="PPAT"/>
    <property type="match status" value="1"/>
</dbReference>
<dbReference type="FunFam" id="3.40.50.620:FF:000012">
    <property type="entry name" value="Phosphopantetheine adenylyltransferase"/>
    <property type="match status" value="1"/>
</dbReference>
<dbReference type="Gene3D" id="3.40.50.620">
    <property type="entry name" value="HUPs"/>
    <property type="match status" value="1"/>
</dbReference>
<dbReference type="HAMAP" id="MF_00151">
    <property type="entry name" value="PPAT_bact"/>
    <property type="match status" value="1"/>
</dbReference>
<dbReference type="InterPro" id="IPR004821">
    <property type="entry name" value="Cyt_trans-like"/>
</dbReference>
<dbReference type="InterPro" id="IPR001980">
    <property type="entry name" value="PPAT"/>
</dbReference>
<dbReference type="InterPro" id="IPR014729">
    <property type="entry name" value="Rossmann-like_a/b/a_fold"/>
</dbReference>
<dbReference type="NCBIfam" id="TIGR01510">
    <property type="entry name" value="coaD_prev_kdtB"/>
    <property type="match status" value="1"/>
</dbReference>
<dbReference type="NCBIfam" id="TIGR00125">
    <property type="entry name" value="cyt_tran_rel"/>
    <property type="match status" value="1"/>
</dbReference>
<dbReference type="PANTHER" id="PTHR21342">
    <property type="entry name" value="PHOSPHOPANTETHEINE ADENYLYLTRANSFERASE"/>
    <property type="match status" value="1"/>
</dbReference>
<dbReference type="PANTHER" id="PTHR21342:SF1">
    <property type="entry name" value="PHOSPHOPANTETHEINE ADENYLYLTRANSFERASE"/>
    <property type="match status" value="1"/>
</dbReference>
<dbReference type="Pfam" id="PF01467">
    <property type="entry name" value="CTP_transf_like"/>
    <property type="match status" value="1"/>
</dbReference>
<dbReference type="PRINTS" id="PR01020">
    <property type="entry name" value="LPSBIOSNTHSS"/>
</dbReference>
<dbReference type="SUPFAM" id="SSF52374">
    <property type="entry name" value="Nucleotidylyl transferase"/>
    <property type="match status" value="1"/>
</dbReference>
<gene>
    <name evidence="1" type="primary">coaD</name>
    <name type="ordered locus">Sbal195_4471</name>
</gene>
<keyword id="KW-0067">ATP-binding</keyword>
<keyword id="KW-0173">Coenzyme A biosynthesis</keyword>
<keyword id="KW-0963">Cytoplasm</keyword>
<keyword id="KW-0460">Magnesium</keyword>
<keyword id="KW-0547">Nucleotide-binding</keyword>
<keyword id="KW-0548">Nucleotidyltransferase</keyword>
<keyword id="KW-0808">Transferase</keyword>
<protein>
    <recommendedName>
        <fullName evidence="1">Phosphopantetheine adenylyltransferase</fullName>
        <ecNumber evidence="1">2.7.7.3</ecNumber>
    </recommendedName>
    <alternativeName>
        <fullName evidence="1">Dephospho-CoA pyrophosphorylase</fullName>
    </alternativeName>
    <alternativeName>
        <fullName evidence="1">Pantetheine-phosphate adenylyltransferase</fullName>
        <shortName evidence="1">PPAT</shortName>
    </alternativeName>
</protein>
<sequence>MHTRAIYPGTFDPITNGHADLIERAAKLFKHVIIGIAANPSKQPRFTLEERVELVNRVTAHLDNVEVVGFSGLLVDFAKEQKASVLVRGLRAVSDFEYEFQLANMNRRLSPDLESVFLTPAEENSFISSTLVKEVALHGGDVSQFVHSEVATALAAKLKLAKP</sequence>
<proteinExistence type="inferred from homology"/>
<feature type="chain" id="PRO_1000076786" description="Phosphopantetheine adenylyltransferase">
    <location>
        <begin position="1"/>
        <end position="163"/>
    </location>
</feature>
<feature type="binding site" evidence="1">
    <location>
        <begin position="10"/>
        <end position="11"/>
    </location>
    <ligand>
        <name>ATP</name>
        <dbReference type="ChEBI" id="CHEBI:30616"/>
    </ligand>
</feature>
<feature type="binding site" evidence="1">
    <location>
        <position position="10"/>
    </location>
    <ligand>
        <name>substrate</name>
    </ligand>
</feature>
<feature type="binding site" evidence="1">
    <location>
        <position position="18"/>
    </location>
    <ligand>
        <name>ATP</name>
        <dbReference type="ChEBI" id="CHEBI:30616"/>
    </ligand>
</feature>
<feature type="binding site" evidence="1">
    <location>
        <position position="42"/>
    </location>
    <ligand>
        <name>substrate</name>
    </ligand>
</feature>
<feature type="binding site" evidence="1">
    <location>
        <position position="74"/>
    </location>
    <ligand>
        <name>substrate</name>
    </ligand>
</feature>
<feature type="binding site" evidence="1">
    <location>
        <position position="88"/>
    </location>
    <ligand>
        <name>substrate</name>
    </ligand>
</feature>
<feature type="binding site" evidence="1">
    <location>
        <begin position="89"/>
        <end position="91"/>
    </location>
    <ligand>
        <name>ATP</name>
        <dbReference type="ChEBI" id="CHEBI:30616"/>
    </ligand>
</feature>
<feature type="binding site" evidence="1">
    <location>
        <position position="99"/>
    </location>
    <ligand>
        <name>ATP</name>
        <dbReference type="ChEBI" id="CHEBI:30616"/>
    </ligand>
</feature>
<feature type="binding site" evidence="1">
    <location>
        <begin position="124"/>
        <end position="130"/>
    </location>
    <ligand>
        <name>ATP</name>
        <dbReference type="ChEBI" id="CHEBI:30616"/>
    </ligand>
</feature>
<feature type="site" description="Transition state stabilizer" evidence="1">
    <location>
        <position position="18"/>
    </location>
</feature>